<protein>
    <recommendedName>
        <fullName evidence="1">DNA gyrase inhibitor YacG</fullName>
    </recommendedName>
</protein>
<gene>
    <name evidence="1" type="primary">yacG</name>
</gene>
<accession>Q50961</accession>
<reference key="1">
    <citation type="journal article" date="1995" name="Mol. Microbiol.">
        <title>Characterization of the pilF-pilD pilus-assembly locus of Neisseria gonorrhoeae.</title>
        <authorList>
            <person name="Freitag N.E."/>
            <person name="Seifert H.S."/>
            <person name="Koomey M."/>
        </authorList>
    </citation>
    <scope>NUCLEOTIDE SEQUENCE [GENOMIC DNA]</scope>
    <source>
        <strain>MS11</strain>
    </source>
</reference>
<sequence>MAESRQTRLQVKCPTCQTAVVWKPENAFRPFCSQRCKLIDLGGWADGKYTVSGQTESLPEISEPDGAYR</sequence>
<feature type="chain" id="PRO_0000211709" description="DNA gyrase inhibitor YacG">
    <location>
        <begin position="1"/>
        <end position="69"/>
    </location>
</feature>
<feature type="binding site" evidence="1">
    <location>
        <position position="13"/>
    </location>
    <ligand>
        <name>Zn(2+)</name>
        <dbReference type="ChEBI" id="CHEBI:29105"/>
    </ligand>
</feature>
<feature type="binding site" evidence="1">
    <location>
        <position position="16"/>
    </location>
    <ligand>
        <name>Zn(2+)</name>
        <dbReference type="ChEBI" id="CHEBI:29105"/>
    </ligand>
</feature>
<feature type="binding site" evidence="1">
    <location>
        <position position="32"/>
    </location>
    <ligand>
        <name>Zn(2+)</name>
        <dbReference type="ChEBI" id="CHEBI:29105"/>
    </ligand>
</feature>
<feature type="binding site" evidence="1">
    <location>
        <position position="36"/>
    </location>
    <ligand>
        <name>Zn(2+)</name>
        <dbReference type="ChEBI" id="CHEBI:29105"/>
    </ligand>
</feature>
<evidence type="ECO:0000255" key="1">
    <source>
        <dbReference type="HAMAP-Rule" id="MF_00649"/>
    </source>
</evidence>
<evidence type="ECO:0000305" key="2"/>
<keyword id="KW-0479">Metal-binding</keyword>
<keyword id="KW-0862">Zinc</keyword>
<comment type="function">
    <text evidence="1">Inhibits all the catalytic activities of DNA gyrase by preventing its interaction with DNA. Acts by binding directly to the C-terminal domain of GyrB, which probably disrupts DNA binding by the gyrase.</text>
</comment>
<comment type="cofactor">
    <cofactor evidence="1">
        <name>Zn(2+)</name>
        <dbReference type="ChEBI" id="CHEBI:29105"/>
    </cofactor>
    <text evidence="1">Binds 1 zinc ion.</text>
</comment>
<comment type="subunit">
    <text evidence="1">Interacts with GyrB.</text>
</comment>
<comment type="similarity">
    <text evidence="1">Belongs to the DNA gyrase inhibitor YacG family.</text>
</comment>
<comment type="sequence caution" evidence="2">
    <conflict type="erroneous initiation">
        <sequence resource="EMBL-CDS" id="AAC43466"/>
    </conflict>
    <text>Extended N-terminus.</text>
</comment>
<organism>
    <name type="scientific">Neisseria gonorrhoeae</name>
    <dbReference type="NCBI Taxonomy" id="485"/>
    <lineage>
        <taxon>Bacteria</taxon>
        <taxon>Pseudomonadati</taxon>
        <taxon>Pseudomonadota</taxon>
        <taxon>Betaproteobacteria</taxon>
        <taxon>Neisseriales</taxon>
        <taxon>Neisseriaceae</taxon>
        <taxon>Neisseria</taxon>
    </lineage>
</organism>
<dbReference type="EMBL" id="U32588">
    <property type="protein sequence ID" value="AAC43466.1"/>
    <property type="status" value="ALT_INIT"/>
    <property type="molecule type" value="Genomic_DNA"/>
</dbReference>
<dbReference type="PIR" id="S77587">
    <property type="entry name" value="S77587"/>
</dbReference>
<dbReference type="RefSeq" id="WP_003696096.1">
    <property type="nucleotide sequence ID" value="NZ_WHPL01000002.1"/>
</dbReference>
<dbReference type="SMR" id="Q50961"/>
<dbReference type="GO" id="GO:0008657">
    <property type="term" value="F:DNA topoisomerase type II (double strand cut, ATP-hydrolyzing) inhibitor activity"/>
    <property type="evidence" value="ECO:0007669"/>
    <property type="project" value="UniProtKB-UniRule"/>
</dbReference>
<dbReference type="GO" id="GO:0008270">
    <property type="term" value="F:zinc ion binding"/>
    <property type="evidence" value="ECO:0007669"/>
    <property type="project" value="UniProtKB-UniRule"/>
</dbReference>
<dbReference type="GO" id="GO:0006355">
    <property type="term" value="P:regulation of DNA-templated transcription"/>
    <property type="evidence" value="ECO:0007669"/>
    <property type="project" value="InterPro"/>
</dbReference>
<dbReference type="Gene3D" id="3.30.50.10">
    <property type="entry name" value="Erythroid Transcription Factor GATA-1, subunit A"/>
    <property type="match status" value="1"/>
</dbReference>
<dbReference type="HAMAP" id="MF_00649">
    <property type="entry name" value="DNA_gyrase_inhibitor_YacG"/>
    <property type="match status" value="1"/>
</dbReference>
<dbReference type="InterPro" id="IPR005584">
    <property type="entry name" value="DNA_gyrase_inhibitor_YacG"/>
</dbReference>
<dbReference type="InterPro" id="IPR013088">
    <property type="entry name" value="Znf_NHR/GATA"/>
</dbReference>
<dbReference type="PANTHER" id="PTHR36150">
    <property type="entry name" value="DNA GYRASE INHIBITOR YACG"/>
    <property type="match status" value="1"/>
</dbReference>
<dbReference type="PANTHER" id="PTHR36150:SF1">
    <property type="entry name" value="DNA GYRASE INHIBITOR YACG"/>
    <property type="match status" value="1"/>
</dbReference>
<dbReference type="Pfam" id="PF03884">
    <property type="entry name" value="YacG"/>
    <property type="match status" value="1"/>
</dbReference>
<dbReference type="SUPFAM" id="SSF57716">
    <property type="entry name" value="Glucocorticoid receptor-like (DNA-binding domain)"/>
    <property type="match status" value="1"/>
</dbReference>
<proteinExistence type="inferred from homology"/>
<name>YACG_NEIGO</name>